<accession>B8F6N1</accession>
<keyword id="KW-1185">Reference proteome</keyword>
<keyword id="KW-0687">Ribonucleoprotein</keyword>
<keyword id="KW-0689">Ribosomal protein</keyword>
<keyword id="KW-0694">RNA-binding</keyword>
<keyword id="KW-0699">rRNA-binding</keyword>
<protein>
    <recommendedName>
        <fullName evidence="1">Large ribosomal subunit protein uL10</fullName>
    </recommendedName>
    <alternativeName>
        <fullName evidence="2">50S ribosomal protein L10</fullName>
    </alternativeName>
</protein>
<comment type="function">
    <text evidence="1">Forms part of the ribosomal stalk, playing a central role in the interaction of the ribosome with GTP-bound translation factors.</text>
</comment>
<comment type="subunit">
    <text evidence="1">Part of the ribosomal stalk of the 50S ribosomal subunit. The N-terminus interacts with L11 and the large rRNA to form the base of the stalk. The C-terminus forms an elongated spine to which L12 dimers bind in a sequential fashion forming a multimeric L10(L12)X complex.</text>
</comment>
<comment type="similarity">
    <text evidence="1">Belongs to the universal ribosomal protein uL10 family.</text>
</comment>
<proteinExistence type="inferred from homology"/>
<sequence length="163" mass="17614">MALNLQDKQAIVAEVNEAAKGALSAVVADSRGVTVEKMTELRKAAREAGVSMRVVRNTLLRRAVEGTEFECLKDTFTGPTLIAFSNEHPGAAARLFKDFAKANKEFEVKGAAFEGKIQDVEFLATLPTYEEAIARLMGTMKEAAAGKLVRTLAALRDKLQEAA</sequence>
<feature type="chain" id="PRO_1000195549" description="Large ribosomal subunit protein uL10">
    <location>
        <begin position="1"/>
        <end position="163"/>
    </location>
</feature>
<dbReference type="EMBL" id="CP001321">
    <property type="protein sequence ID" value="ACL32983.1"/>
    <property type="molecule type" value="Genomic_DNA"/>
</dbReference>
<dbReference type="RefSeq" id="WP_005714465.1">
    <property type="nucleotide sequence ID" value="NC_011852.1"/>
</dbReference>
<dbReference type="SMR" id="B8F6N1"/>
<dbReference type="STRING" id="557723.HAPS_1411"/>
<dbReference type="GeneID" id="66617775"/>
<dbReference type="KEGG" id="hap:HAPS_1411"/>
<dbReference type="HOGENOM" id="CLU_092227_0_2_6"/>
<dbReference type="Proteomes" id="UP000006743">
    <property type="component" value="Chromosome"/>
</dbReference>
<dbReference type="GO" id="GO:0015934">
    <property type="term" value="C:large ribosomal subunit"/>
    <property type="evidence" value="ECO:0007669"/>
    <property type="project" value="InterPro"/>
</dbReference>
<dbReference type="GO" id="GO:0070180">
    <property type="term" value="F:large ribosomal subunit rRNA binding"/>
    <property type="evidence" value="ECO:0007669"/>
    <property type="project" value="UniProtKB-UniRule"/>
</dbReference>
<dbReference type="GO" id="GO:0003735">
    <property type="term" value="F:structural constituent of ribosome"/>
    <property type="evidence" value="ECO:0007669"/>
    <property type="project" value="InterPro"/>
</dbReference>
<dbReference type="GO" id="GO:0006412">
    <property type="term" value="P:translation"/>
    <property type="evidence" value="ECO:0007669"/>
    <property type="project" value="UniProtKB-UniRule"/>
</dbReference>
<dbReference type="CDD" id="cd05797">
    <property type="entry name" value="Ribosomal_L10"/>
    <property type="match status" value="1"/>
</dbReference>
<dbReference type="FunFam" id="3.30.70.1730:FF:000001">
    <property type="entry name" value="50S ribosomal protein L10"/>
    <property type="match status" value="1"/>
</dbReference>
<dbReference type="Gene3D" id="3.30.70.1730">
    <property type="match status" value="1"/>
</dbReference>
<dbReference type="Gene3D" id="6.10.250.2350">
    <property type="match status" value="1"/>
</dbReference>
<dbReference type="HAMAP" id="MF_00362">
    <property type="entry name" value="Ribosomal_uL10"/>
    <property type="match status" value="1"/>
</dbReference>
<dbReference type="InterPro" id="IPR001790">
    <property type="entry name" value="Ribosomal_uL10"/>
</dbReference>
<dbReference type="InterPro" id="IPR043141">
    <property type="entry name" value="Ribosomal_uL10-like_sf"/>
</dbReference>
<dbReference type="InterPro" id="IPR022973">
    <property type="entry name" value="Ribosomal_uL10_bac"/>
</dbReference>
<dbReference type="InterPro" id="IPR047865">
    <property type="entry name" value="Ribosomal_uL10_bac_type"/>
</dbReference>
<dbReference type="InterPro" id="IPR002363">
    <property type="entry name" value="Ribosomal_uL10_CS_bac"/>
</dbReference>
<dbReference type="NCBIfam" id="NF000955">
    <property type="entry name" value="PRK00099.1-1"/>
    <property type="match status" value="1"/>
</dbReference>
<dbReference type="PANTHER" id="PTHR11560">
    <property type="entry name" value="39S RIBOSOMAL PROTEIN L10, MITOCHONDRIAL"/>
    <property type="match status" value="1"/>
</dbReference>
<dbReference type="Pfam" id="PF00466">
    <property type="entry name" value="Ribosomal_L10"/>
    <property type="match status" value="1"/>
</dbReference>
<dbReference type="SUPFAM" id="SSF160369">
    <property type="entry name" value="Ribosomal protein L10-like"/>
    <property type="match status" value="1"/>
</dbReference>
<dbReference type="PROSITE" id="PS01109">
    <property type="entry name" value="RIBOSOMAL_L10"/>
    <property type="match status" value="1"/>
</dbReference>
<name>RL10_GLAP5</name>
<organism>
    <name type="scientific">Glaesserella parasuis serovar 5 (strain SH0165)</name>
    <name type="common">Haemophilus parasuis</name>
    <dbReference type="NCBI Taxonomy" id="557723"/>
    <lineage>
        <taxon>Bacteria</taxon>
        <taxon>Pseudomonadati</taxon>
        <taxon>Pseudomonadota</taxon>
        <taxon>Gammaproteobacteria</taxon>
        <taxon>Pasteurellales</taxon>
        <taxon>Pasteurellaceae</taxon>
        <taxon>Glaesserella</taxon>
    </lineage>
</organism>
<evidence type="ECO:0000255" key="1">
    <source>
        <dbReference type="HAMAP-Rule" id="MF_00362"/>
    </source>
</evidence>
<evidence type="ECO:0000305" key="2"/>
<gene>
    <name evidence="1" type="primary">rplJ</name>
    <name type="ordered locus">HAPS_1411</name>
</gene>
<reference key="1">
    <citation type="journal article" date="2009" name="J. Bacteriol.">
        <title>Complete genome sequence of Haemophilus parasuis SH0165.</title>
        <authorList>
            <person name="Yue M."/>
            <person name="Yang F."/>
            <person name="Yang J."/>
            <person name="Bei W."/>
            <person name="Cai X."/>
            <person name="Chen L."/>
            <person name="Dong J."/>
            <person name="Zhou R."/>
            <person name="Jin M."/>
            <person name="Jin Q."/>
            <person name="Chen H."/>
        </authorList>
    </citation>
    <scope>NUCLEOTIDE SEQUENCE [LARGE SCALE GENOMIC DNA]</scope>
    <source>
        <strain>SH0165</strain>
    </source>
</reference>